<organism>
    <name type="scientific">Rickettsia prowazekii (strain Madrid E)</name>
    <dbReference type="NCBI Taxonomy" id="272947"/>
    <lineage>
        <taxon>Bacteria</taxon>
        <taxon>Pseudomonadati</taxon>
        <taxon>Pseudomonadota</taxon>
        <taxon>Alphaproteobacteria</taxon>
        <taxon>Rickettsiales</taxon>
        <taxon>Rickettsiaceae</taxon>
        <taxon>Rickettsieae</taxon>
        <taxon>Rickettsia</taxon>
        <taxon>typhus group</taxon>
    </lineage>
</organism>
<evidence type="ECO:0000255" key="1"/>
<evidence type="ECO:0000305" key="2"/>
<accession>Q9ZDA5</accession>
<sequence length="173" mass="20491">MKKQIIYPDFITRIFSTALDLSLVAFIAIPISQFCFFNLLWLFFHDYFLSIKINIHNSNEMFNSIMSQEFYEYLKLGNFNKYILFNILIFATNILVICSYFITFWYYKGTTLSKMFLRMKIVDAVTLNRPTLKQLIKRFLAYITFPIGIFFILFSSKKQALHDRIAGTVVIKS</sequence>
<feature type="chain" id="PRO_0000101371" description="Uncharacterized protein RP437">
    <location>
        <begin position="1"/>
        <end position="173"/>
    </location>
</feature>
<feature type="transmembrane region" description="Helical" evidence="1">
    <location>
        <begin position="24"/>
        <end position="44"/>
    </location>
</feature>
<feature type="transmembrane region" description="Helical" evidence="1">
    <location>
        <begin position="82"/>
        <end position="102"/>
    </location>
</feature>
<feature type="transmembrane region" description="Helical" evidence="1">
    <location>
        <begin position="135"/>
        <end position="155"/>
    </location>
</feature>
<gene>
    <name type="ordered locus">RP437</name>
</gene>
<name>Y437_RICPR</name>
<proteinExistence type="predicted"/>
<keyword id="KW-1003">Cell membrane</keyword>
<keyword id="KW-0472">Membrane</keyword>
<keyword id="KW-1185">Reference proteome</keyword>
<keyword id="KW-0812">Transmembrane</keyword>
<keyword id="KW-1133">Transmembrane helix</keyword>
<protein>
    <recommendedName>
        <fullName>Uncharacterized protein RP437</fullName>
    </recommendedName>
</protein>
<comment type="subcellular location">
    <subcellularLocation>
        <location evidence="2">Cell membrane</location>
        <topology evidence="2">Multi-pass membrane protein</topology>
    </subcellularLocation>
</comment>
<dbReference type="EMBL" id="AJ235271">
    <property type="protein sequence ID" value="CAA14894.1"/>
    <property type="molecule type" value="Genomic_DNA"/>
</dbReference>
<dbReference type="PIR" id="D71702">
    <property type="entry name" value="D71702"/>
</dbReference>
<dbReference type="RefSeq" id="NP_220818.1">
    <property type="nucleotide sequence ID" value="NC_000963.1"/>
</dbReference>
<dbReference type="RefSeq" id="WP_004597650.1">
    <property type="nucleotide sequence ID" value="NC_000963.1"/>
</dbReference>
<dbReference type="STRING" id="272947.gene:17555517"/>
<dbReference type="EnsemblBacteria" id="CAA14894">
    <property type="protein sequence ID" value="CAA14894"/>
    <property type="gene ID" value="CAA14894"/>
</dbReference>
<dbReference type="KEGG" id="rpr:RP437"/>
<dbReference type="PATRIC" id="fig|272947.5.peg.450"/>
<dbReference type="eggNOG" id="COG1714">
    <property type="taxonomic scope" value="Bacteria"/>
</dbReference>
<dbReference type="HOGENOM" id="CLU_1546444_0_0_5"/>
<dbReference type="OrthoDB" id="9793824at2"/>
<dbReference type="Proteomes" id="UP000002480">
    <property type="component" value="Chromosome"/>
</dbReference>
<dbReference type="GO" id="GO:0005886">
    <property type="term" value="C:plasma membrane"/>
    <property type="evidence" value="ECO:0007669"/>
    <property type="project" value="UniProtKB-SubCell"/>
</dbReference>
<dbReference type="InterPro" id="IPR051791">
    <property type="entry name" value="Pra-immunoreactive"/>
</dbReference>
<dbReference type="InterPro" id="IPR010432">
    <property type="entry name" value="RDD"/>
</dbReference>
<dbReference type="PANTHER" id="PTHR36115:SF4">
    <property type="entry name" value="MEMBRANE PROTEIN"/>
    <property type="match status" value="1"/>
</dbReference>
<dbReference type="PANTHER" id="PTHR36115">
    <property type="entry name" value="PROLINE-RICH ANTIGEN HOMOLOG-RELATED"/>
    <property type="match status" value="1"/>
</dbReference>
<dbReference type="Pfam" id="PF06271">
    <property type="entry name" value="RDD"/>
    <property type="match status" value="1"/>
</dbReference>
<reference key="1">
    <citation type="journal article" date="1998" name="Nature">
        <title>The genome sequence of Rickettsia prowazekii and the origin of mitochondria.</title>
        <authorList>
            <person name="Andersson S.G.E."/>
            <person name="Zomorodipour A."/>
            <person name="Andersson J.O."/>
            <person name="Sicheritz-Ponten T."/>
            <person name="Alsmark U.C.M."/>
            <person name="Podowski R.M."/>
            <person name="Naeslund A.K."/>
            <person name="Eriksson A.-S."/>
            <person name="Winkler H.H."/>
            <person name="Kurland C.G."/>
        </authorList>
    </citation>
    <scope>NUCLEOTIDE SEQUENCE [LARGE SCALE GENOMIC DNA]</scope>
    <source>
        <strain>Madrid E</strain>
    </source>
</reference>